<proteinExistence type="inferred from homology"/>
<accession>Q2FIR0</accession>
<comment type="function">
    <text evidence="1">Probably involved in ribonucleotide reductase function.</text>
</comment>
<comment type="similarity">
    <text evidence="1">Belongs to the NrdI family.</text>
</comment>
<organism>
    <name type="scientific">Staphylococcus aureus (strain USA300)</name>
    <dbReference type="NCBI Taxonomy" id="367830"/>
    <lineage>
        <taxon>Bacteria</taxon>
        <taxon>Bacillati</taxon>
        <taxon>Bacillota</taxon>
        <taxon>Bacilli</taxon>
        <taxon>Bacillales</taxon>
        <taxon>Staphylococcaceae</taxon>
        <taxon>Staphylococcus</taxon>
    </lineage>
</organism>
<reference key="1">
    <citation type="journal article" date="2006" name="Lancet">
        <title>Complete genome sequence of USA300, an epidemic clone of community-acquired meticillin-resistant Staphylococcus aureus.</title>
        <authorList>
            <person name="Diep B.A."/>
            <person name="Gill S.R."/>
            <person name="Chang R.F."/>
            <person name="Phan T.H."/>
            <person name="Chen J.H."/>
            <person name="Davidson M.G."/>
            <person name="Lin F."/>
            <person name="Lin J."/>
            <person name="Carleton H.A."/>
            <person name="Mongodin E.F."/>
            <person name="Sensabaugh G.F."/>
            <person name="Perdreau-Remington F."/>
        </authorList>
    </citation>
    <scope>NUCLEOTIDE SEQUENCE [LARGE SCALE GENOMIC DNA]</scope>
    <source>
        <strain>USA300</strain>
    </source>
</reference>
<dbReference type="EMBL" id="CP000255">
    <property type="protein sequence ID" value="ABD22229.1"/>
    <property type="molecule type" value="Genomic_DNA"/>
</dbReference>
<dbReference type="RefSeq" id="WP_000692521.1">
    <property type="nucleotide sequence ID" value="NZ_CP027476.1"/>
</dbReference>
<dbReference type="SMR" id="Q2FIR0"/>
<dbReference type="KEGG" id="saa:SAUSA300_0715"/>
<dbReference type="HOGENOM" id="CLU_114845_3_0_9"/>
<dbReference type="OMA" id="PNMYSFE"/>
<dbReference type="Proteomes" id="UP000001939">
    <property type="component" value="Chromosome"/>
</dbReference>
<dbReference type="GO" id="GO:0010181">
    <property type="term" value="F:FMN binding"/>
    <property type="evidence" value="ECO:0007669"/>
    <property type="project" value="InterPro"/>
</dbReference>
<dbReference type="GO" id="GO:0036211">
    <property type="term" value="P:protein modification process"/>
    <property type="evidence" value="ECO:0007669"/>
    <property type="project" value="InterPro"/>
</dbReference>
<dbReference type="Gene3D" id="3.40.50.360">
    <property type="match status" value="1"/>
</dbReference>
<dbReference type="HAMAP" id="MF_00128">
    <property type="entry name" value="NrdI"/>
    <property type="match status" value="1"/>
</dbReference>
<dbReference type="InterPro" id="IPR029039">
    <property type="entry name" value="Flavoprotein-like_sf"/>
</dbReference>
<dbReference type="InterPro" id="IPR020852">
    <property type="entry name" value="RNR_Ib_NrdI_bac"/>
</dbReference>
<dbReference type="InterPro" id="IPR004465">
    <property type="entry name" value="RNR_NrdI"/>
</dbReference>
<dbReference type="NCBIfam" id="TIGR00333">
    <property type="entry name" value="nrdI"/>
    <property type="match status" value="1"/>
</dbReference>
<dbReference type="PANTHER" id="PTHR37297">
    <property type="entry name" value="PROTEIN NRDI"/>
    <property type="match status" value="1"/>
</dbReference>
<dbReference type="PANTHER" id="PTHR37297:SF1">
    <property type="entry name" value="PROTEIN NRDI"/>
    <property type="match status" value="1"/>
</dbReference>
<dbReference type="Pfam" id="PF07972">
    <property type="entry name" value="Flavodoxin_NdrI"/>
    <property type="match status" value="1"/>
</dbReference>
<dbReference type="PIRSF" id="PIRSF005087">
    <property type="entry name" value="NrdI"/>
    <property type="match status" value="1"/>
</dbReference>
<dbReference type="SUPFAM" id="SSF52218">
    <property type="entry name" value="Flavoproteins"/>
    <property type="match status" value="1"/>
</dbReference>
<protein>
    <recommendedName>
        <fullName evidence="1">Protein NrdI</fullName>
    </recommendedName>
</protein>
<evidence type="ECO:0000255" key="1">
    <source>
        <dbReference type="HAMAP-Rule" id="MF_00128"/>
    </source>
</evidence>
<feature type="chain" id="PRO_1000016526" description="Protein NrdI">
    <location>
        <begin position="1"/>
        <end position="132"/>
    </location>
</feature>
<gene>
    <name evidence="1" type="primary">nrdI</name>
    <name type="ordered locus">SAUSA300_0715</name>
</gene>
<sequence length="132" mass="15166">MKIIYFSFTGNVRRFIKRTELENTLEITAENCMEPVHEPFIIVTGTIGFGEVPEPVQSFLEVNHQYIRGVAASGNRNWGLNFAKAGRTISEEYNVPLLMKFELHGKNKDVIEFKNKVGNFNENHGREKVQSY</sequence>
<name>NRDI_STAA3</name>